<sequence>MARSVWKGPFVELSLLRKAEDAQEASSNKPIKTWSRRSTILPQFVGLTFNVYNGHKFIPVSVSEEMVGHKLGEFAPTRTFPGHAADKKGKR</sequence>
<keyword id="KW-1185">Reference proteome</keyword>
<keyword id="KW-0687">Ribonucleoprotein</keyword>
<keyword id="KW-0689">Ribosomal protein</keyword>
<keyword id="KW-0694">RNA-binding</keyword>
<keyword id="KW-0699">rRNA-binding</keyword>
<comment type="function">
    <text evidence="1">Protein S19 forms a complex with S13 that binds strongly to the 16S ribosomal RNA.</text>
</comment>
<comment type="similarity">
    <text evidence="1">Belongs to the universal ribosomal protein uS19 family.</text>
</comment>
<gene>
    <name evidence="1" type="primary">rpsS</name>
    <name type="ordered locus">ELI_08170</name>
</gene>
<organism>
    <name type="scientific">Erythrobacter litoralis (strain HTCC2594)</name>
    <dbReference type="NCBI Taxonomy" id="314225"/>
    <lineage>
        <taxon>Bacteria</taxon>
        <taxon>Pseudomonadati</taxon>
        <taxon>Pseudomonadota</taxon>
        <taxon>Alphaproteobacteria</taxon>
        <taxon>Sphingomonadales</taxon>
        <taxon>Erythrobacteraceae</taxon>
        <taxon>Erythrobacter/Porphyrobacter group</taxon>
        <taxon>Erythrobacter</taxon>
    </lineage>
</organism>
<accession>Q2N9B5</accession>
<name>RS19_ERYLH</name>
<protein>
    <recommendedName>
        <fullName evidence="1">Small ribosomal subunit protein uS19</fullName>
    </recommendedName>
    <alternativeName>
        <fullName evidence="2">30S ribosomal protein S19</fullName>
    </alternativeName>
</protein>
<reference key="1">
    <citation type="journal article" date="2009" name="J. Bacteriol.">
        <title>Complete genome sequence of Erythrobacter litoralis HTCC2594.</title>
        <authorList>
            <person name="Oh H.M."/>
            <person name="Giovannoni S.J."/>
            <person name="Ferriera S."/>
            <person name="Johnson J."/>
            <person name="Cho J.C."/>
        </authorList>
    </citation>
    <scope>NUCLEOTIDE SEQUENCE [LARGE SCALE GENOMIC DNA]</scope>
    <source>
        <strain>HTCC2594</strain>
    </source>
</reference>
<dbReference type="EMBL" id="CP000157">
    <property type="protein sequence ID" value="ABC63726.1"/>
    <property type="molecule type" value="Genomic_DNA"/>
</dbReference>
<dbReference type="RefSeq" id="WP_011414558.1">
    <property type="nucleotide sequence ID" value="NC_007722.1"/>
</dbReference>
<dbReference type="SMR" id="Q2N9B5"/>
<dbReference type="STRING" id="314225.ELI_08170"/>
<dbReference type="KEGG" id="eli:ELI_08170"/>
<dbReference type="eggNOG" id="COG0185">
    <property type="taxonomic scope" value="Bacteria"/>
</dbReference>
<dbReference type="HOGENOM" id="CLU_144911_0_1_5"/>
<dbReference type="OrthoDB" id="9797833at2"/>
<dbReference type="Proteomes" id="UP000008808">
    <property type="component" value="Chromosome"/>
</dbReference>
<dbReference type="GO" id="GO:0005737">
    <property type="term" value="C:cytoplasm"/>
    <property type="evidence" value="ECO:0007669"/>
    <property type="project" value="UniProtKB-ARBA"/>
</dbReference>
<dbReference type="GO" id="GO:0015935">
    <property type="term" value="C:small ribosomal subunit"/>
    <property type="evidence" value="ECO:0007669"/>
    <property type="project" value="InterPro"/>
</dbReference>
<dbReference type="GO" id="GO:0019843">
    <property type="term" value="F:rRNA binding"/>
    <property type="evidence" value="ECO:0007669"/>
    <property type="project" value="UniProtKB-UniRule"/>
</dbReference>
<dbReference type="GO" id="GO:0003735">
    <property type="term" value="F:structural constituent of ribosome"/>
    <property type="evidence" value="ECO:0007669"/>
    <property type="project" value="InterPro"/>
</dbReference>
<dbReference type="GO" id="GO:0000028">
    <property type="term" value="P:ribosomal small subunit assembly"/>
    <property type="evidence" value="ECO:0007669"/>
    <property type="project" value="TreeGrafter"/>
</dbReference>
<dbReference type="GO" id="GO:0006412">
    <property type="term" value="P:translation"/>
    <property type="evidence" value="ECO:0007669"/>
    <property type="project" value="UniProtKB-UniRule"/>
</dbReference>
<dbReference type="FunFam" id="3.30.860.10:FF:000001">
    <property type="entry name" value="30S ribosomal protein S19"/>
    <property type="match status" value="1"/>
</dbReference>
<dbReference type="Gene3D" id="3.30.860.10">
    <property type="entry name" value="30s Ribosomal Protein S19, Chain A"/>
    <property type="match status" value="1"/>
</dbReference>
<dbReference type="HAMAP" id="MF_00531">
    <property type="entry name" value="Ribosomal_uS19"/>
    <property type="match status" value="1"/>
</dbReference>
<dbReference type="InterPro" id="IPR002222">
    <property type="entry name" value="Ribosomal_uS19"/>
</dbReference>
<dbReference type="InterPro" id="IPR005732">
    <property type="entry name" value="Ribosomal_uS19_bac-type"/>
</dbReference>
<dbReference type="InterPro" id="IPR020934">
    <property type="entry name" value="Ribosomal_uS19_CS"/>
</dbReference>
<dbReference type="InterPro" id="IPR023575">
    <property type="entry name" value="Ribosomal_uS19_SF"/>
</dbReference>
<dbReference type="NCBIfam" id="TIGR01050">
    <property type="entry name" value="rpsS_bact"/>
    <property type="match status" value="1"/>
</dbReference>
<dbReference type="PANTHER" id="PTHR11880">
    <property type="entry name" value="RIBOSOMAL PROTEIN S19P FAMILY MEMBER"/>
    <property type="match status" value="1"/>
</dbReference>
<dbReference type="PANTHER" id="PTHR11880:SF8">
    <property type="entry name" value="SMALL RIBOSOMAL SUBUNIT PROTEIN US19M"/>
    <property type="match status" value="1"/>
</dbReference>
<dbReference type="Pfam" id="PF00203">
    <property type="entry name" value="Ribosomal_S19"/>
    <property type="match status" value="1"/>
</dbReference>
<dbReference type="PIRSF" id="PIRSF002144">
    <property type="entry name" value="Ribosomal_S19"/>
    <property type="match status" value="1"/>
</dbReference>
<dbReference type="PRINTS" id="PR00975">
    <property type="entry name" value="RIBOSOMALS19"/>
</dbReference>
<dbReference type="SUPFAM" id="SSF54570">
    <property type="entry name" value="Ribosomal protein S19"/>
    <property type="match status" value="1"/>
</dbReference>
<dbReference type="PROSITE" id="PS00323">
    <property type="entry name" value="RIBOSOMAL_S19"/>
    <property type="match status" value="1"/>
</dbReference>
<evidence type="ECO:0000255" key="1">
    <source>
        <dbReference type="HAMAP-Rule" id="MF_00531"/>
    </source>
</evidence>
<evidence type="ECO:0000305" key="2"/>
<feature type="chain" id="PRO_1000051047" description="Small ribosomal subunit protein uS19">
    <location>
        <begin position="1"/>
        <end position="91"/>
    </location>
</feature>
<proteinExistence type="inferred from homology"/>